<feature type="chain" id="PRO_1000071520" description="Phosphopantetheine adenylyltransferase">
    <location>
        <begin position="1"/>
        <end position="161"/>
    </location>
</feature>
<feature type="binding site" evidence="1">
    <location>
        <begin position="9"/>
        <end position="10"/>
    </location>
    <ligand>
        <name>ATP</name>
        <dbReference type="ChEBI" id="CHEBI:30616"/>
    </ligand>
</feature>
<feature type="binding site" evidence="1">
    <location>
        <position position="9"/>
    </location>
    <ligand>
        <name>substrate</name>
    </ligand>
</feature>
<feature type="binding site" evidence="1">
    <location>
        <position position="17"/>
    </location>
    <ligand>
        <name>ATP</name>
        <dbReference type="ChEBI" id="CHEBI:30616"/>
    </ligand>
</feature>
<feature type="binding site" evidence="1">
    <location>
        <position position="41"/>
    </location>
    <ligand>
        <name>substrate</name>
    </ligand>
</feature>
<feature type="binding site" evidence="1">
    <location>
        <position position="73"/>
    </location>
    <ligand>
        <name>substrate</name>
    </ligand>
</feature>
<feature type="binding site" evidence="1">
    <location>
        <position position="87"/>
    </location>
    <ligand>
        <name>substrate</name>
    </ligand>
</feature>
<feature type="binding site" evidence="1">
    <location>
        <begin position="88"/>
        <end position="90"/>
    </location>
    <ligand>
        <name>ATP</name>
        <dbReference type="ChEBI" id="CHEBI:30616"/>
    </ligand>
</feature>
<feature type="binding site" evidence="1">
    <location>
        <position position="98"/>
    </location>
    <ligand>
        <name>ATP</name>
        <dbReference type="ChEBI" id="CHEBI:30616"/>
    </ligand>
</feature>
<feature type="binding site" evidence="1">
    <location>
        <begin position="123"/>
        <end position="129"/>
    </location>
    <ligand>
        <name>ATP</name>
        <dbReference type="ChEBI" id="CHEBI:30616"/>
    </ligand>
</feature>
<feature type="site" description="Transition state stabilizer" evidence="1">
    <location>
        <position position="17"/>
    </location>
</feature>
<accession>A4J698</accession>
<keyword id="KW-0067">ATP-binding</keyword>
<keyword id="KW-0173">Coenzyme A biosynthesis</keyword>
<keyword id="KW-0963">Cytoplasm</keyword>
<keyword id="KW-0460">Magnesium</keyword>
<keyword id="KW-0547">Nucleotide-binding</keyword>
<keyword id="KW-0548">Nucleotidyltransferase</keyword>
<keyword id="KW-1185">Reference proteome</keyword>
<keyword id="KW-0808">Transferase</keyword>
<evidence type="ECO:0000255" key="1">
    <source>
        <dbReference type="HAMAP-Rule" id="MF_00151"/>
    </source>
</evidence>
<gene>
    <name evidence="1" type="primary">coaD</name>
    <name type="ordered locus">Dred_2084</name>
</gene>
<reference key="1">
    <citation type="submission" date="2007-03" db="EMBL/GenBank/DDBJ databases">
        <title>Complete sequence of Desulfotomaculum reducens MI-1.</title>
        <authorList>
            <consortium name="US DOE Joint Genome Institute"/>
            <person name="Copeland A."/>
            <person name="Lucas S."/>
            <person name="Lapidus A."/>
            <person name="Barry K."/>
            <person name="Detter J.C."/>
            <person name="Glavina del Rio T."/>
            <person name="Hammon N."/>
            <person name="Israni S."/>
            <person name="Dalin E."/>
            <person name="Tice H."/>
            <person name="Pitluck S."/>
            <person name="Sims D."/>
            <person name="Brettin T."/>
            <person name="Bruce D."/>
            <person name="Han C."/>
            <person name="Tapia R."/>
            <person name="Schmutz J."/>
            <person name="Larimer F."/>
            <person name="Land M."/>
            <person name="Hauser L."/>
            <person name="Kyrpides N."/>
            <person name="Kim E."/>
            <person name="Tebo B.M."/>
            <person name="Richardson P."/>
        </authorList>
    </citation>
    <scope>NUCLEOTIDE SEQUENCE [LARGE SCALE GENOMIC DNA]</scope>
    <source>
        <strain>ATCC BAA-1160 / DSM 100696 / MI-1</strain>
    </source>
</reference>
<sequence>MRIGVYPGSFDPVTNGHMDIVERSVGLFDRLIVAVAKNAQKKPLFSVEERVEILKNVLKKYPNIVVDTFDGLTVTYALQQGAIAIVRGLRAFSDFENEFIFALTNKKLAPDLETVYLMTRAEYSFISSTTVKEVASFKGSLSGMVPEIVAQKIQDKYGYGK</sequence>
<dbReference type="EC" id="2.7.7.3" evidence="1"/>
<dbReference type="EMBL" id="CP000612">
    <property type="protein sequence ID" value="ABO50601.1"/>
    <property type="molecule type" value="Genomic_DNA"/>
</dbReference>
<dbReference type="RefSeq" id="WP_011878407.1">
    <property type="nucleotide sequence ID" value="NC_009253.1"/>
</dbReference>
<dbReference type="SMR" id="A4J698"/>
<dbReference type="STRING" id="349161.Dred_2084"/>
<dbReference type="KEGG" id="drm:Dred_2084"/>
<dbReference type="eggNOG" id="COG0669">
    <property type="taxonomic scope" value="Bacteria"/>
</dbReference>
<dbReference type="HOGENOM" id="CLU_100149_0_1_9"/>
<dbReference type="OrthoDB" id="9806661at2"/>
<dbReference type="UniPathway" id="UPA00241">
    <property type="reaction ID" value="UER00355"/>
</dbReference>
<dbReference type="Proteomes" id="UP000001556">
    <property type="component" value="Chromosome"/>
</dbReference>
<dbReference type="GO" id="GO:0005737">
    <property type="term" value="C:cytoplasm"/>
    <property type="evidence" value="ECO:0007669"/>
    <property type="project" value="UniProtKB-SubCell"/>
</dbReference>
<dbReference type="GO" id="GO:0005524">
    <property type="term" value="F:ATP binding"/>
    <property type="evidence" value="ECO:0007669"/>
    <property type="project" value="UniProtKB-KW"/>
</dbReference>
<dbReference type="GO" id="GO:0004595">
    <property type="term" value="F:pantetheine-phosphate adenylyltransferase activity"/>
    <property type="evidence" value="ECO:0007669"/>
    <property type="project" value="UniProtKB-UniRule"/>
</dbReference>
<dbReference type="GO" id="GO:0015937">
    <property type="term" value="P:coenzyme A biosynthetic process"/>
    <property type="evidence" value="ECO:0007669"/>
    <property type="project" value="UniProtKB-UniRule"/>
</dbReference>
<dbReference type="CDD" id="cd02163">
    <property type="entry name" value="PPAT"/>
    <property type="match status" value="1"/>
</dbReference>
<dbReference type="Gene3D" id="3.40.50.620">
    <property type="entry name" value="HUPs"/>
    <property type="match status" value="1"/>
</dbReference>
<dbReference type="HAMAP" id="MF_00151">
    <property type="entry name" value="PPAT_bact"/>
    <property type="match status" value="1"/>
</dbReference>
<dbReference type="InterPro" id="IPR004821">
    <property type="entry name" value="Cyt_trans-like"/>
</dbReference>
<dbReference type="InterPro" id="IPR001980">
    <property type="entry name" value="PPAT"/>
</dbReference>
<dbReference type="InterPro" id="IPR014729">
    <property type="entry name" value="Rossmann-like_a/b/a_fold"/>
</dbReference>
<dbReference type="NCBIfam" id="TIGR01510">
    <property type="entry name" value="coaD_prev_kdtB"/>
    <property type="match status" value="1"/>
</dbReference>
<dbReference type="NCBIfam" id="TIGR00125">
    <property type="entry name" value="cyt_tran_rel"/>
    <property type="match status" value="1"/>
</dbReference>
<dbReference type="PANTHER" id="PTHR21342">
    <property type="entry name" value="PHOSPHOPANTETHEINE ADENYLYLTRANSFERASE"/>
    <property type="match status" value="1"/>
</dbReference>
<dbReference type="PANTHER" id="PTHR21342:SF1">
    <property type="entry name" value="PHOSPHOPANTETHEINE ADENYLYLTRANSFERASE"/>
    <property type="match status" value="1"/>
</dbReference>
<dbReference type="Pfam" id="PF01467">
    <property type="entry name" value="CTP_transf_like"/>
    <property type="match status" value="1"/>
</dbReference>
<dbReference type="PRINTS" id="PR01020">
    <property type="entry name" value="LPSBIOSNTHSS"/>
</dbReference>
<dbReference type="SUPFAM" id="SSF52374">
    <property type="entry name" value="Nucleotidylyl transferase"/>
    <property type="match status" value="1"/>
</dbReference>
<protein>
    <recommendedName>
        <fullName evidence="1">Phosphopantetheine adenylyltransferase</fullName>
        <ecNumber evidence="1">2.7.7.3</ecNumber>
    </recommendedName>
    <alternativeName>
        <fullName evidence="1">Dephospho-CoA pyrophosphorylase</fullName>
    </alternativeName>
    <alternativeName>
        <fullName evidence="1">Pantetheine-phosphate adenylyltransferase</fullName>
        <shortName evidence="1">PPAT</shortName>
    </alternativeName>
</protein>
<name>COAD_DESRM</name>
<organism>
    <name type="scientific">Desulforamulus reducens (strain ATCC BAA-1160 / DSM 100696 / MI-1)</name>
    <name type="common">Desulfotomaculum reducens</name>
    <dbReference type="NCBI Taxonomy" id="349161"/>
    <lineage>
        <taxon>Bacteria</taxon>
        <taxon>Bacillati</taxon>
        <taxon>Bacillota</taxon>
        <taxon>Clostridia</taxon>
        <taxon>Eubacteriales</taxon>
        <taxon>Peptococcaceae</taxon>
        <taxon>Desulforamulus</taxon>
    </lineage>
</organism>
<proteinExistence type="inferred from homology"/>
<comment type="function">
    <text evidence="1">Reversibly transfers an adenylyl group from ATP to 4'-phosphopantetheine, yielding dephospho-CoA (dPCoA) and pyrophosphate.</text>
</comment>
<comment type="catalytic activity">
    <reaction evidence="1">
        <text>(R)-4'-phosphopantetheine + ATP + H(+) = 3'-dephospho-CoA + diphosphate</text>
        <dbReference type="Rhea" id="RHEA:19801"/>
        <dbReference type="ChEBI" id="CHEBI:15378"/>
        <dbReference type="ChEBI" id="CHEBI:30616"/>
        <dbReference type="ChEBI" id="CHEBI:33019"/>
        <dbReference type="ChEBI" id="CHEBI:57328"/>
        <dbReference type="ChEBI" id="CHEBI:61723"/>
        <dbReference type="EC" id="2.7.7.3"/>
    </reaction>
</comment>
<comment type="cofactor">
    <cofactor evidence="1">
        <name>Mg(2+)</name>
        <dbReference type="ChEBI" id="CHEBI:18420"/>
    </cofactor>
</comment>
<comment type="pathway">
    <text evidence="1">Cofactor biosynthesis; coenzyme A biosynthesis; CoA from (R)-pantothenate: step 4/5.</text>
</comment>
<comment type="subunit">
    <text evidence="1">Homohexamer.</text>
</comment>
<comment type="subcellular location">
    <subcellularLocation>
        <location evidence="1">Cytoplasm</location>
    </subcellularLocation>
</comment>
<comment type="similarity">
    <text evidence="1">Belongs to the bacterial CoaD family.</text>
</comment>